<gene>
    <name type="primary">OR5D18</name>
</gene>
<evidence type="ECO:0000255" key="1"/>
<evidence type="ECO:0000255" key="2">
    <source>
        <dbReference type="PROSITE-ProRule" id="PRU00521"/>
    </source>
</evidence>
<evidence type="ECO:0000269" key="3">
    <source>
    </source>
</evidence>
<evidence type="ECO:0000269" key="4">
    <source>
    </source>
</evidence>
<evidence type="ECO:0000269" key="5">
    <source ref="2"/>
</evidence>
<evidence type="ECO:0000305" key="6"/>
<dbReference type="EMBL" id="AB065781">
    <property type="protein sequence ID" value="BAC06001.1"/>
    <property type="molecule type" value="Genomic_DNA"/>
</dbReference>
<dbReference type="EMBL" id="CH471076">
    <property type="protein sequence ID" value="EAW73685.1"/>
    <property type="molecule type" value="Genomic_DNA"/>
</dbReference>
<dbReference type="EMBL" id="BC136925">
    <property type="protein sequence ID" value="AAI36926.1"/>
    <property type="molecule type" value="mRNA"/>
</dbReference>
<dbReference type="EMBL" id="BC136927">
    <property type="protein sequence ID" value="AAI36928.1"/>
    <property type="molecule type" value="mRNA"/>
</dbReference>
<dbReference type="EMBL" id="AF399525">
    <property type="protein sequence ID" value="AAK95010.1"/>
    <property type="molecule type" value="Genomic_DNA"/>
</dbReference>
<dbReference type="EMBL" id="BK004395">
    <property type="protein sequence ID" value="DAA04793.1"/>
    <property type="molecule type" value="Genomic_DNA"/>
</dbReference>
<dbReference type="EMBL" id="BK004329">
    <property type="protein sequence ID" value="DAA04727.1"/>
    <property type="molecule type" value="Genomic_DNA"/>
</dbReference>
<dbReference type="CCDS" id="CCDS31510.1"/>
<dbReference type="RefSeq" id="NP_001001952.1">
    <property type="nucleotide sequence ID" value="NM_001001952.1"/>
</dbReference>
<dbReference type="SMR" id="Q8NGL1"/>
<dbReference type="FunCoup" id="Q8NGL1">
    <property type="interactions" value="416"/>
</dbReference>
<dbReference type="STRING" id="9606.ENSP00000335025"/>
<dbReference type="GlyCosmos" id="Q8NGL1">
    <property type="glycosylation" value="1 site, No reported glycans"/>
</dbReference>
<dbReference type="GlyGen" id="Q8NGL1">
    <property type="glycosylation" value="1 site"/>
</dbReference>
<dbReference type="iPTMnet" id="Q8NGL1"/>
<dbReference type="PhosphoSitePlus" id="Q8NGL1"/>
<dbReference type="BioMuta" id="OR5D18"/>
<dbReference type="DMDM" id="38372720"/>
<dbReference type="MassIVE" id="Q8NGL1"/>
<dbReference type="PaxDb" id="9606-ENSP00000335025"/>
<dbReference type="Antibodypedia" id="77336">
    <property type="antibodies" value="4 antibodies from 4 providers"/>
</dbReference>
<dbReference type="DNASU" id="219438"/>
<dbReference type="Ensembl" id="ENST00000333976.7">
    <property type="protein sequence ID" value="ENSP00000335025.4"/>
    <property type="gene ID" value="ENSG00000186119.9"/>
</dbReference>
<dbReference type="GeneID" id="219438"/>
<dbReference type="KEGG" id="hsa:219438"/>
<dbReference type="MANE-Select" id="ENST00000333976.7">
    <property type="protein sequence ID" value="ENSP00000335025.4"/>
    <property type="RefSeq nucleotide sequence ID" value="NM_001001952.1"/>
    <property type="RefSeq protein sequence ID" value="NP_001001952.1"/>
</dbReference>
<dbReference type="UCSC" id="uc010rin.2">
    <property type="organism name" value="human"/>
</dbReference>
<dbReference type="AGR" id="HGNC:15285"/>
<dbReference type="CTD" id="219438"/>
<dbReference type="GeneCards" id="OR5D18"/>
<dbReference type="HGNC" id="HGNC:15285">
    <property type="gene designation" value="OR5D18"/>
</dbReference>
<dbReference type="HPA" id="ENSG00000186119">
    <property type="expression patterns" value="Not detected"/>
</dbReference>
<dbReference type="neXtProt" id="NX_Q8NGL1"/>
<dbReference type="PharmGKB" id="PA32521"/>
<dbReference type="VEuPathDB" id="HostDB:ENSG00000186119"/>
<dbReference type="eggNOG" id="ENOG502SJBD">
    <property type="taxonomic scope" value="Eukaryota"/>
</dbReference>
<dbReference type="GeneTree" id="ENSGT01130000278300"/>
<dbReference type="HOGENOM" id="CLU_012526_5_5_1"/>
<dbReference type="InParanoid" id="Q8NGL1"/>
<dbReference type="OMA" id="NQWLLFF"/>
<dbReference type="OrthoDB" id="9444602at2759"/>
<dbReference type="PAN-GO" id="Q8NGL1">
    <property type="GO annotations" value="4 GO annotations based on evolutionary models"/>
</dbReference>
<dbReference type="PhylomeDB" id="Q8NGL1"/>
<dbReference type="TreeFam" id="TF352753"/>
<dbReference type="PathwayCommons" id="Q8NGL1"/>
<dbReference type="Reactome" id="R-HSA-9752946">
    <property type="pathway name" value="Expression and translocation of olfactory receptors"/>
</dbReference>
<dbReference type="BioGRID-ORCS" id="219438">
    <property type="hits" value="11 hits in 710 CRISPR screens"/>
</dbReference>
<dbReference type="GeneWiki" id="OR5D18"/>
<dbReference type="GenomeRNAi" id="219438"/>
<dbReference type="Pharos" id="Q8NGL1">
    <property type="development level" value="Tdark"/>
</dbReference>
<dbReference type="PRO" id="PR:Q8NGL1"/>
<dbReference type="Proteomes" id="UP000005640">
    <property type="component" value="Chromosome 11"/>
</dbReference>
<dbReference type="RNAct" id="Q8NGL1">
    <property type="molecule type" value="protein"/>
</dbReference>
<dbReference type="Bgee" id="ENSG00000186119">
    <property type="expression patterns" value="Expressed in male germ line stem cell (sensu Vertebrata) in testis and 1 other cell type or tissue"/>
</dbReference>
<dbReference type="GO" id="GO:0005886">
    <property type="term" value="C:plasma membrane"/>
    <property type="evidence" value="ECO:0007669"/>
    <property type="project" value="UniProtKB-SubCell"/>
</dbReference>
<dbReference type="GO" id="GO:0004930">
    <property type="term" value="F:G protein-coupled receptor activity"/>
    <property type="evidence" value="ECO:0007669"/>
    <property type="project" value="UniProtKB-KW"/>
</dbReference>
<dbReference type="GO" id="GO:0005549">
    <property type="term" value="F:odorant binding"/>
    <property type="evidence" value="ECO:0000318"/>
    <property type="project" value="GO_Central"/>
</dbReference>
<dbReference type="GO" id="GO:0004984">
    <property type="term" value="F:olfactory receptor activity"/>
    <property type="evidence" value="ECO:0000318"/>
    <property type="project" value="GO_Central"/>
</dbReference>
<dbReference type="GO" id="GO:0007186">
    <property type="term" value="P:G protein-coupled receptor signaling pathway"/>
    <property type="evidence" value="ECO:0000318"/>
    <property type="project" value="GO_Central"/>
</dbReference>
<dbReference type="GO" id="GO:0007608">
    <property type="term" value="P:sensory perception of smell"/>
    <property type="evidence" value="ECO:0000318"/>
    <property type="project" value="GO_Central"/>
</dbReference>
<dbReference type="CDD" id="cd15410">
    <property type="entry name" value="7tmA_OR5D-like"/>
    <property type="match status" value="1"/>
</dbReference>
<dbReference type="FunFam" id="1.10.1220.70:FF:000001">
    <property type="entry name" value="Olfactory receptor"/>
    <property type="match status" value="1"/>
</dbReference>
<dbReference type="FunFam" id="1.20.1070.10:FF:000003">
    <property type="entry name" value="Olfactory receptor"/>
    <property type="match status" value="1"/>
</dbReference>
<dbReference type="Gene3D" id="1.20.1070.10">
    <property type="entry name" value="Rhodopsin 7-helix transmembrane proteins"/>
    <property type="match status" value="1"/>
</dbReference>
<dbReference type="InterPro" id="IPR000276">
    <property type="entry name" value="GPCR_Rhodpsn"/>
</dbReference>
<dbReference type="InterPro" id="IPR017452">
    <property type="entry name" value="GPCR_Rhodpsn_7TM"/>
</dbReference>
<dbReference type="InterPro" id="IPR000725">
    <property type="entry name" value="Olfact_rcpt"/>
</dbReference>
<dbReference type="PANTHER" id="PTHR48018">
    <property type="entry name" value="OLFACTORY RECEPTOR"/>
    <property type="match status" value="1"/>
</dbReference>
<dbReference type="Pfam" id="PF13853">
    <property type="entry name" value="7tm_4"/>
    <property type="match status" value="1"/>
</dbReference>
<dbReference type="PRINTS" id="PR00237">
    <property type="entry name" value="GPCRRHODOPSN"/>
</dbReference>
<dbReference type="PRINTS" id="PR00245">
    <property type="entry name" value="OLFACTORYR"/>
</dbReference>
<dbReference type="SUPFAM" id="SSF81321">
    <property type="entry name" value="Family A G protein-coupled receptor-like"/>
    <property type="match status" value="1"/>
</dbReference>
<dbReference type="PROSITE" id="PS00237">
    <property type="entry name" value="G_PROTEIN_RECEP_F1_1"/>
    <property type="match status" value="1"/>
</dbReference>
<dbReference type="PROSITE" id="PS50262">
    <property type="entry name" value="G_PROTEIN_RECEP_F1_2"/>
    <property type="match status" value="1"/>
</dbReference>
<organism>
    <name type="scientific">Homo sapiens</name>
    <name type="common">Human</name>
    <dbReference type="NCBI Taxonomy" id="9606"/>
    <lineage>
        <taxon>Eukaryota</taxon>
        <taxon>Metazoa</taxon>
        <taxon>Chordata</taxon>
        <taxon>Craniata</taxon>
        <taxon>Vertebrata</taxon>
        <taxon>Euteleostomi</taxon>
        <taxon>Mammalia</taxon>
        <taxon>Eutheria</taxon>
        <taxon>Euarchontoglires</taxon>
        <taxon>Primates</taxon>
        <taxon>Haplorrhini</taxon>
        <taxon>Catarrhini</taxon>
        <taxon>Hominidae</taxon>
        <taxon>Homo</taxon>
    </lineage>
</organism>
<name>OR5DI_HUMAN</name>
<keyword id="KW-1003">Cell membrane</keyword>
<keyword id="KW-1015">Disulfide bond</keyword>
<keyword id="KW-0297">G-protein coupled receptor</keyword>
<keyword id="KW-0325">Glycoprotein</keyword>
<keyword id="KW-0472">Membrane</keyword>
<keyword id="KW-0552">Olfaction</keyword>
<keyword id="KW-0675">Receptor</keyword>
<keyword id="KW-1185">Reference proteome</keyword>
<keyword id="KW-0716">Sensory transduction</keyword>
<keyword id="KW-0807">Transducer</keyword>
<keyword id="KW-0812">Transmembrane</keyword>
<keyword id="KW-1133">Transmembrane helix</keyword>
<feature type="chain" id="PRO_0000150594" description="Olfactory receptor 5D18">
    <location>
        <begin position="1"/>
        <end position="313"/>
    </location>
</feature>
<feature type="topological domain" description="Extracellular" evidence="1">
    <location>
        <begin position="1"/>
        <end position="26"/>
    </location>
</feature>
<feature type="transmembrane region" description="Helical; Name=1" evidence="1">
    <location>
        <begin position="27"/>
        <end position="47"/>
    </location>
</feature>
<feature type="topological domain" description="Cytoplasmic" evidence="1">
    <location>
        <begin position="48"/>
        <end position="55"/>
    </location>
</feature>
<feature type="transmembrane region" description="Helical; Name=2" evidence="1">
    <location>
        <begin position="56"/>
        <end position="76"/>
    </location>
</feature>
<feature type="topological domain" description="Extracellular" evidence="1">
    <location>
        <begin position="77"/>
        <end position="100"/>
    </location>
</feature>
<feature type="transmembrane region" description="Helical; Name=3" evidence="1">
    <location>
        <begin position="101"/>
        <end position="121"/>
    </location>
</feature>
<feature type="topological domain" description="Cytoplasmic" evidence="1">
    <location>
        <begin position="122"/>
        <end position="140"/>
    </location>
</feature>
<feature type="transmembrane region" description="Helical; Name=4" evidence="1">
    <location>
        <begin position="141"/>
        <end position="161"/>
    </location>
</feature>
<feature type="topological domain" description="Extracellular" evidence="1">
    <location>
        <begin position="162"/>
        <end position="197"/>
    </location>
</feature>
<feature type="transmembrane region" description="Helical; Name=5" evidence="1">
    <location>
        <begin position="198"/>
        <end position="218"/>
    </location>
</feature>
<feature type="topological domain" description="Cytoplasmic" evidence="1">
    <location>
        <begin position="219"/>
        <end position="238"/>
    </location>
</feature>
<feature type="transmembrane region" description="Helical; Name=6" evidence="1">
    <location>
        <begin position="239"/>
        <end position="259"/>
    </location>
</feature>
<feature type="topological domain" description="Extracellular" evidence="1">
    <location>
        <begin position="260"/>
        <end position="272"/>
    </location>
</feature>
<feature type="transmembrane region" description="Helical; Name=7" evidence="1">
    <location>
        <begin position="273"/>
        <end position="293"/>
    </location>
</feature>
<feature type="topological domain" description="Cytoplasmic" evidence="1">
    <location>
        <begin position="294"/>
        <end position="313"/>
    </location>
</feature>
<feature type="glycosylation site" description="N-linked (GlcNAc...) asparagine" evidence="1">
    <location>
        <position position="7"/>
    </location>
</feature>
<feature type="disulfide bond" evidence="2">
    <location>
        <begin position="98"/>
        <end position="190"/>
    </location>
</feature>
<feature type="sequence variant" id="VAR_048046" description="In dbSNP:rs7948629.">
    <original>Y</original>
    <variation>C</variation>
    <location>
        <position position="36"/>
    </location>
</feature>
<feature type="sequence variant" id="VAR_034224" description="In dbSNP:rs11231180.">
    <original>V</original>
    <variation>M</variation>
    <location>
        <position position="118"/>
    </location>
</feature>
<feature type="sequence variant" id="VAR_048047" description="In dbSNP:rs297081." evidence="3 4 5">
    <original>N</original>
    <variation>D</variation>
    <location>
        <position position="136"/>
    </location>
</feature>
<feature type="sequence variant" id="VAR_062042" description="In dbSNP:rs55832853.">
    <original>H</original>
    <variation>R</variation>
    <location>
        <position position="270"/>
    </location>
</feature>
<comment type="function">
    <text evidence="6">Odorant receptor.</text>
</comment>
<comment type="subcellular location">
    <subcellularLocation>
        <location>Cell membrane</location>
        <topology>Multi-pass membrane protein</topology>
    </subcellularLocation>
</comment>
<comment type="similarity">
    <text evidence="2">Belongs to the G-protein coupled receptor 1 family.</text>
</comment>
<comment type="online information" name="Human Olfactory Receptor Data Exploratorium (HORDE)">
    <link uri="https://genome.weizmann.ac.il/horde/card/index/symbol:OR5D18/term:OR5D18/type:keyword"/>
</comment>
<proteinExistence type="evidence at transcript level"/>
<sequence length="313" mass="35348">MLLTDRNTSGTTFTLLGFSDYPELQVPLFLVFLAIYNVTVLGNIGLIVIIKINPKLHTPMYFFLSQLSFVDFCYSSIIAPKMLVNLVVKDRTISFLGCVVQFFFFCTFVVTESFLLAVMAYDRFVAICNPLLYTVNMSQKLCVLLVVGSYAWGVSCSLELTCSALKLCFHGFNTINHFFCEFSSLLSLSCSDTYINQWLLFFLATFNEISTLLIVLTSYAFIVVTILKMRSVSGRRKAFSTCASHLTAITIFHGTILFLYCVPNSKNSRHTVKVASVFYTVVIPMLNPLIYSLRNKDVKDTVTEILDTKVFSY</sequence>
<accession>Q8NGL1</accession>
<accession>Q6IF67</accession>
<accession>Q6IFD3</accession>
<accession>Q96RB3</accession>
<reference key="1">
    <citation type="submission" date="2001-07" db="EMBL/GenBank/DDBJ databases">
        <title>Genome-wide discovery and analysis of human seven transmembrane helix receptor genes.</title>
        <authorList>
            <person name="Suwa M."/>
            <person name="Sato T."/>
            <person name="Okouchi I."/>
            <person name="Arita M."/>
            <person name="Futami K."/>
            <person name="Matsumoto S."/>
            <person name="Tsutsumi S."/>
            <person name="Aburatani H."/>
            <person name="Asai K."/>
            <person name="Akiyama Y."/>
        </authorList>
    </citation>
    <scope>NUCLEOTIDE SEQUENCE [GENOMIC DNA]</scope>
</reference>
<reference key="2">
    <citation type="submission" date="2005-07" db="EMBL/GenBank/DDBJ databases">
        <authorList>
            <person name="Mural R.J."/>
            <person name="Istrail S."/>
            <person name="Sutton G.G."/>
            <person name="Florea L."/>
            <person name="Halpern A.L."/>
            <person name="Mobarry C.M."/>
            <person name="Lippert R."/>
            <person name="Walenz B."/>
            <person name="Shatkay H."/>
            <person name="Dew I."/>
            <person name="Miller J.R."/>
            <person name="Flanigan M.J."/>
            <person name="Edwards N.J."/>
            <person name="Bolanos R."/>
            <person name="Fasulo D."/>
            <person name="Halldorsson B.V."/>
            <person name="Hannenhalli S."/>
            <person name="Turner R."/>
            <person name="Yooseph S."/>
            <person name="Lu F."/>
            <person name="Nusskern D.R."/>
            <person name="Shue B.C."/>
            <person name="Zheng X.H."/>
            <person name="Zhong F."/>
            <person name="Delcher A.L."/>
            <person name="Huson D.H."/>
            <person name="Kravitz S.A."/>
            <person name="Mouchard L."/>
            <person name="Reinert K."/>
            <person name="Remington K.A."/>
            <person name="Clark A.G."/>
            <person name="Waterman M.S."/>
            <person name="Eichler E.E."/>
            <person name="Adams M.D."/>
            <person name="Hunkapiller M.W."/>
            <person name="Myers E.W."/>
            <person name="Venter J.C."/>
        </authorList>
    </citation>
    <scope>NUCLEOTIDE SEQUENCE [LARGE SCALE GENOMIC DNA]</scope>
    <scope>VARIANT ASP-136</scope>
</reference>
<reference key="3">
    <citation type="journal article" date="2004" name="Genome Res.">
        <title>The status, quality, and expansion of the NIH full-length cDNA project: the Mammalian Gene Collection (MGC).</title>
        <authorList>
            <consortium name="The MGC Project Team"/>
        </authorList>
    </citation>
    <scope>NUCLEOTIDE SEQUENCE [LARGE SCALE MRNA]</scope>
    <scope>VARIANT ASP-136</scope>
</reference>
<reference key="4">
    <citation type="journal article" date="2002" name="Genomics">
        <title>DEFOG: a practical scheme for deciphering families of genes.</title>
        <authorList>
            <person name="Fuchs T."/>
            <person name="Malecova B."/>
            <person name="Linhart C."/>
            <person name="Sharan R."/>
            <person name="Khen M."/>
            <person name="Herwig R."/>
            <person name="Shmulevich D."/>
            <person name="Elkon R."/>
            <person name="Steinfath M."/>
            <person name="O'Brien J.K."/>
            <person name="Radelof U."/>
            <person name="Lehrach H."/>
            <person name="Lancet D."/>
            <person name="Shamir R."/>
        </authorList>
    </citation>
    <scope>NUCLEOTIDE SEQUENCE [GENOMIC DNA] OF 69-284</scope>
    <scope>VARIANT ASP-136</scope>
</reference>
<reference key="5">
    <citation type="journal article" date="2004" name="Proc. Natl. Acad. Sci. U.S.A.">
        <title>The human olfactory receptor gene family.</title>
        <authorList>
            <person name="Malnic B."/>
            <person name="Godfrey P.A."/>
            <person name="Buck L.B."/>
        </authorList>
    </citation>
    <scope>IDENTIFICATION</scope>
</reference>
<reference key="6">
    <citation type="journal article" date="2004" name="Proc. Natl. Acad. Sci. U.S.A.">
        <authorList>
            <person name="Malnic B."/>
            <person name="Godfrey P.A."/>
            <person name="Buck L.B."/>
        </authorList>
    </citation>
    <scope>ERRATUM OF PUBMED:14983052</scope>
</reference>
<protein>
    <recommendedName>
        <fullName>Olfactory receptor 5D18</fullName>
    </recommendedName>
    <alternativeName>
        <fullName>Olfactory receptor OR11-143</fullName>
    </alternativeName>
    <alternativeName>
        <fullName>Olfactory receptor OR11-152</fullName>
    </alternativeName>
</protein>